<name>ARP3_BOVIN</name>
<proteinExistence type="evidence at protein level"/>
<evidence type="ECO:0000250" key="1">
    <source>
        <dbReference type="UniProtKB" id="P61158"/>
    </source>
</evidence>
<evidence type="ECO:0000269" key="2">
    <source>
    </source>
</evidence>
<evidence type="ECO:0000269" key="3">
    <source>
    </source>
</evidence>
<evidence type="ECO:0000305" key="4"/>
<evidence type="ECO:0007829" key="5">
    <source>
        <dbReference type="PDB" id="1K8K"/>
    </source>
</evidence>
<evidence type="ECO:0007829" key="6">
    <source>
        <dbReference type="PDB" id="2P9I"/>
    </source>
</evidence>
<evidence type="ECO:0007829" key="7">
    <source>
        <dbReference type="PDB" id="3ULE"/>
    </source>
</evidence>
<evidence type="ECO:0007829" key="8">
    <source>
        <dbReference type="PDB" id="7T5Q"/>
    </source>
</evidence>
<protein>
    <recommendedName>
        <fullName>Actin-related protein 3</fullName>
    </recommendedName>
    <alternativeName>
        <fullName>Actin-2</fullName>
    </alternativeName>
    <alternativeName>
        <fullName>Actin-like protein 3</fullName>
    </alternativeName>
</protein>
<feature type="initiator methionine" description="Removed" evidence="1">
    <location>
        <position position="1"/>
    </location>
</feature>
<feature type="chain" id="PRO_0000089078" description="Actin-related protein 3">
    <location>
        <begin position="2"/>
        <end position="418"/>
    </location>
</feature>
<feature type="modified residue" description="N-acetylalanine" evidence="1">
    <location>
        <position position="2"/>
    </location>
</feature>
<feature type="modified residue" description="N6-acetyllysine" evidence="1">
    <location>
        <position position="240"/>
    </location>
</feature>
<feature type="modified residue" description="N6-acetyllysine" evidence="1">
    <location>
        <position position="244"/>
    </location>
</feature>
<feature type="modified residue" description="N6-acetyllysine" evidence="1">
    <location>
        <position position="251"/>
    </location>
</feature>
<feature type="modified residue" description="N6-acetyllysine" evidence="1">
    <location>
        <position position="254"/>
    </location>
</feature>
<feature type="sequence conflict" description="In Ref. 2; AAI23583." evidence="4" ref="2">
    <original>D</original>
    <variation>G</variation>
    <location>
        <position position="344"/>
    </location>
</feature>
<feature type="strand" evidence="5">
    <location>
        <begin position="8"/>
        <end position="12"/>
    </location>
</feature>
<feature type="strand" evidence="5">
    <location>
        <begin position="14"/>
        <end position="21"/>
    </location>
</feature>
<feature type="strand" evidence="5">
    <location>
        <begin position="28"/>
        <end position="33"/>
    </location>
</feature>
<feature type="strand" evidence="5">
    <location>
        <begin position="35"/>
        <end position="37"/>
    </location>
</feature>
<feature type="helix" evidence="5">
    <location>
        <begin position="56"/>
        <end position="58"/>
    </location>
</feature>
<feature type="strand" evidence="5">
    <location>
        <begin position="60"/>
        <end position="62"/>
    </location>
</feature>
<feature type="helix" evidence="5">
    <location>
        <begin position="63"/>
        <end position="66"/>
    </location>
</feature>
<feature type="strand" evidence="5">
    <location>
        <begin position="72"/>
        <end position="75"/>
    </location>
</feature>
<feature type="turn" evidence="6">
    <location>
        <begin position="77"/>
        <end position="80"/>
    </location>
</feature>
<feature type="strand" evidence="5">
    <location>
        <begin position="82"/>
        <end position="84"/>
    </location>
</feature>
<feature type="helix" evidence="5">
    <location>
        <begin position="86"/>
        <end position="98"/>
    </location>
</feature>
<feature type="turn" evidence="5">
    <location>
        <begin position="99"/>
        <end position="101"/>
    </location>
</feature>
<feature type="helix" evidence="5">
    <location>
        <begin position="105"/>
        <end position="107"/>
    </location>
</feature>
<feature type="strand" evidence="5">
    <location>
        <begin position="110"/>
        <end position="114"/>
    </location>
</feature>
<feature type="helix" evidence="5">
    <location>
        <begin position="120"/>
        <end position="132"/>
    </location>
</feature>
<feature type="strand" evidence="5">
    <location>
        <begin position="137"/>
        <end position="143"/>
    </location>
</feature>
<feature type="helix" evidence="5">
    <location>
        <begin position="144"/>
        <end position="151"/>
    </location>
</feature>
<feature type="helix" evidence="5">
    <location>
        <begin position="152"/>
        <end position="154"/>
    </location>
</feature>
<feature type="strand" evidence="7">
    <location>
        <begin position="155"/>
        <end position="157"/>
    </location>
</feature>
<feature type="strand" evidence="5">
    <location>
        <begin position="165"/>
        <end position="173"/>
    </location>
</feature>
<feature type="strand" evidence="5">
    <location>
        <begin position="175"/>
        <end position="181"/>
    </location>
</feature>
<feature type="helix" evidence="5">
    <location>
        <begin position="187"/>
        <end position="189"/>
    </location>
</feature>
<feature type="strand" evidence="5">
    <location>
        <begin position="191"/>
        <end position="194"/>
    </location>
</feature>
<feature type="helix" evidence="5">
    <location>
        <begin position="197"/>
        <end position="209"/>
    </location>
</feature>
<feature type="helix" evidence="5">
    <location>
        <begin position="217"/>
        <end position="219"/>
    </location>
</feature>
<feature type="helix" evidence="5">
    <location>
        <begin position="220"/>
        <end position="231"/>
    </location>
</feature>
<feature type="helix" evidence="5">
    <location>
        <begin position="238"/>
        <end position="247"/>
    </location>
</feature>
<feature type="helix" evidence="5">
    <location>
        <begin position="249"/>
        <end position="251"/>
    </location>
</feature>
<feature type="strand" evidence="5">
    <location>
        <begin position="254"/>
        <end position="259"/>
    </location>
</feature>
<feature type="turn" evidence="5">
    <location>
        <begin position="261"/>
        <end position="263"/>
    </location>
</feature>
<feature type="strand" evidence="5">
    <location>
        <begin position="266"/>
        <end position="271"/>
    </location>
</feature>
<feature type="helix" evidence="5">
    <location>
        <begin position="274"/>
        <end position="280"/>
    </location>
</feature>
<feature type="turn" evidence="5">
    <location>
        <begin position="281"/>
        <end position="283"/>
    </location>
</feature>
<feature type="helix" evidence="5">
    <location>
        <begin position="285"/>
        <end position="287"/>
    </location>
</feature>
<feature type="helix" evidence="5">
    <location>
        <begin position="296"/>
        <end position="306"/>
    </location>
</feature>
<feature type="helix" evidence="5">
    <location>
        <begin position="309"/>
        <end position="311"/>
    </location>
</feature>
<feature type="helix" evidence="5">
    <location>
        <begin position="314"/>
        <end position="317"/>
    </location>
</feature>
<feature type="strand" evidence="5">
    <location>
        <begin position="319"/>
        <end position="323"/>
    </location>
</feature>
<feature type="helix" evidence="5">
    <location>
        <begin position="324"/>
        <end position="326"/>
    </location>
</feature>
<feature type="helix" evidence="5">
    <location>
        <begin position="331"/>
        <end position="353"/>
    </location>
</feature>
<feature type="turn" evidence="8">
    <location>
        <begin position="354"/>
        <end position="356"/>
    </location>
</feature>
<feature type="turn" evidence="6">
    <location>
        <begin position="372"/>
        <end position="375"/>
    </location>
</feature>
<feature type="helix" evidence="5">
    <location>
        <begin position="376"/>
        <end position="384"/>
    </location>
</feature>
<feature type="helix" evidence="5">
    <location>
        <begin position="388"/>
        <end position="393"/>
    </location>
</feature>
<feature type="strand" evidence="5">
    <location>
        <begin position="394"/>
        <end position="396"/>
    </location>
</feature>
<feature type="helix" evidence="5">
    <location>
        <begin position="397"/>
        <end position="403"/>
    </location>
</feature>
<feature type="helix" evidence="5">
    <location>
        <begin position="405"/>
        <end position="409"/>
    </location>
</feature>
<gene>
    <name type="primary">ACTR3</name>
    <name type="synonym">ARP3</name>
</gene>
<accession>P61157</accession>
<accession>A5PJ90</accession>
<accession>P32391</accession>
<accession>Q08DS8</accession>
<sequence>MAGRLPACVVDCGTGYTKLGYAGNTEPQFIIPSCIAIKESAKVGDQAQRRVMKGVDDLDFFIGDEAIEKPTYATKWPIRHGIVEDWDLMERFMEQVIFKYLRAEPEDHYFLLTEPPLNTPENREYTAEIMFESFNVPGLYIAVQAVLALAASWTSRQVGERTLTGTVIDSGDGVTHVIPVAEGYVIGSCIKHIPIAGRDITYFIQQLLRDREVGIPPEQSLETAKAVKERYSYVCPDLVKEFNKYDTDGSKWIKQYTGINAISKKEFSIDVGYERFLGPEIFFHPEFANPDFTQPISEVVDEVIQNCPIDVRRPLYKNIVLSGGSTMFRDFGRRLQRDLKRTVDARLKLSEELSGGRLKPKPIDVQVITHHMQRYAVWFGGSMLASTPEFYQVCHTKKDYEEIGPSICRHNPVFGVMS</sequence>
<comment type="function">
    <text evidence="1">ATP-binding component of the Arp2/3 complex, a multiprotein complex that mediates actin polymerization upon stimulation by nucleation-promoting factor (NPF). The Arp2/3 complex mediates the formation of branched actin networks in the cytoplasm, providing the force for cell motility. Seems to contact the pointed end of the daughter actin filament. In podocytes, required for the formation of lamellipodia downstream of AVIL and PLCE1 regulation. In addition to its role in the cytoplasmic cytoskeleton, the Arp2/3 complex also promotes actin polymerization in the nucleus, thereby regulating gene transcription and repair of damaged DNA. The Arp2/3 complex promotes homologous recombination (HR) repair in response to DNA damage by promoting nuclear actin polymerization, leading to drive motility of double-strand breaks (DSBs). Plays a role in ciliogenesis.</text>
</comment>
<comment type="subunit">
    <text evidence="1 2 3">Component of the Arp2/3 complex composed of ACTR2/ARP2, ACTR3/ARP3, ARPC1B/p41-ARC, ARPC2/p34-ARC, ARPC3/p21-ARC, ARPC4/p20-ARC and ARPC5/p16-ARC (PubMed:11721045, PubMed:15505213). Interacts with WHDC1. Interacts weakly with MEFV. Interacts with AVIL (By similarity).</text>
</comment>
<comment type="interaction">
    <interactant intactId="EBI-351419">
        <id>P61157</id>
    </interactant>
    <interactant intactId="EBI-397955">
        <id>Q60598</id>
        <label>Cttn</label>
    </interactant>
    <organismsDiffer>true</organismsDiffer>
    <experiments>4</experiments>
</comment>
<comment type="interaction">
    <interactant intactId="EBI-351419">
        <id>P61157</id>
    </interactant>
    <interactant intactId="EBI-2896409">
        <id>Q00944</id>
        <label>PTK2</label>
    </interactant>
    <organismsDiffer>true</organismsDiffer>
    <experiments>5</experiments>
</comment>
<comment type="interaction">
    <interactant intactId="EBI-351419">
        <id>P61157</id>
    </interactant>
    <interactant intactId="EBI-957615">
        <id>O00401</id>
        <label>WASL</label>
    </interactant>
    <organismsDiffer>true</organismsDiffer>
    <experiments>3</experiments>
</comment>
<comment type="subcellular location">
    <subcellularLocation>
        <location evidence="1">Cytoplasm</location>
        <location evidence="1">Cytoskeleton</location>
    </subcellularLocation>
    <subcellularLocation>
        <location evidence="1">Cell projection</location>
    </subcellularLocation>
    <subcellularLocation>
        <location evidence="1">Nucleus</location>
    </subcellularLocation>
    <text evidence="1">In pre-apoptotic cells, colocalizes with MEFV in large specks (pyroptosomes).</text>
</comment>
<comment type="similarity">
    <text evidence="4">Belongs to the actin family. ARP3 subfamily.</text>
</comment>
<organism>
    <name type="scientific">Bos taurus</name>
    <name type="common">Bovine</name>
    <dbReference type="NCBI Taxonomy" id="9913"/>
    <lineage>
        <taxon>Eukaryota</taxon>
        <taxon>Metazoa</taxon>
        <taxon>Chordata</taxon>
        <taxon>Craniata</taxon>
        <taxon>Vertebrata</taxon>
        <taxon>Euteleostomi</taxon>
        <taxon>Mammalia</taxon>
        <taxon>Eutheria</taxon>
        <taxon>Laurasiatheria</taxon>
        <taxon>Artiodactyla</taxon>
        <taxon>Ruminantia</taxon>
        <taxon>Pecora</taxon>
        <taxon>Bovidae</taxon>
        <taxon>Bovinae</taxon>
        <taxon>Bos</taxon>
    </lineage>
</organism>
<keyword id="KW-0002">3D-structure</keyword>
<keyword id="KW-0007">Acetylation</keyword>
<keyword id="KW-0009">Actin-binding</keyword>
<keyword id="KW-0067">ATP-binding</keyword>
<keyword id="KW-0966">Cell projection</keyword>
<keyword id="KW-0970">Cilium biogenesis/degradation</keyword>
<keyword id="KW-0963">Cytoplasm</keyword>
<keyword id="KW-0206">Cytoskeleton</keyword>
<keyword id="KW-0547">Nucleotide-binding</keyword>
<keyword id="KW-0539">Nucleus</keyword>
<keyword id="KW-1185">Reference proteome</keyword>
<reference key="1">
    <citation type="journal article" date="1992" name="Biochem. Biophys. Res. Commun.">
        <title>Molecular cloning of bovine actin-like protein, actin2.</title>
        <authorList>
            <person name="Tanaka T."/>
            <person name="Shibasaki F."/>
            <person name="Ishikawa M."/>
            <person name="Hirano N."/>
            <person name="Sakai R."/>
            <person name="Nishida J."/>
            <person name="Takenawa T."/>
            <person name="Hirai H."/>
        </authorList>
    </citation>
    <scope>NUCLEOTIDE SEQUENCE [MRNA]</scope>
    <source>
        <tissue>Thymus</tissue>
    </source>
</reference>
<reference key="2">
    <citation type="submission" date="2007-06" db="EMBL/GenBank/DDBJ databases">
        <authorList>
            <consortium name="NIH - Mammalian Gene Collection (MGC) project"/>
        </authorList>
    </citation>
    <scope>NUCLEOTIDE SEQUENCE [LARGE SCALE MRNA]</scope>
    <source>
        <strain>Hereford</strain>
        <tissue>Thymus</tissue>
    </source>
</reference>
<reference key="3">
    <citation type="journal article" date="2001" name="Science">
        <title>Crystal structure of Arp2/3 complex.</title>
        <authorList>
            <person name="Robinson R.C."/>
            <person name="Turbedsky K."/>
            <person name="Kaiser D.A."/>
            <person name="Marchand J.-B."/>
            <person name="Higgs H.N."/>
            <person name="Choe S."/>
            <person name="Pollard T.D."/>
        </authorList>
    </citation>
    <scope>X-RAY CRYSTALLOGRAPHY (2.0 ANGSTROMS) OF ARP2/3 COMPLEX</scope>
</reference>
<reference key="4">
    <citation type="journal article" date="2004" name="Proc. Natl. Acad. Sci. U.S.A.">
        <title>Crystal structures of actin-related protein 2/3 complex with bound ATP or ADP.</title>
        <authorList>
            <person name="Nolen B.J."/>
            <person name="Littlefield R.S."/>
            <person name="Pollard T.D."/>
        </authorList>
    </citation>
    <scope>X-RAY CRYSTALLOGRAPHY (2.55 ANGSTROMS) OF ARP2/3 COMPLEX WITH BOUND ATP</scope>
</reference>
<dbReference type="EMBL" id="D12816">
    <property type="protein sequence ID" value="BAA02249.1"/>
    <property type="molecule type" value="mRNA"/>
</dbReference>
<dbReference type="EMBL" id="BC123582">
    <property type="protein sequence ID" value="AAI23583.1"/>
    <property type="molecule type" value="mRNA"/>
</dbReference>
<dbReference type="EMBL" id="BC142009">
    <property type="protein sequence ID" value="AAI42010.1"/>
    <property type="molecule type" value="mRNA"/>
</dbReference>
<dbReference type="PIR" id="JQ1616">
    <property type="entry name" value="JQ1616"/>
</dbReference>
<dbReference type="RefSeq" id="NP_776651.1">
    <property type="nucleotide sequence ID" value="NM_174226.2"/>
</dbReference>
<dbReference type="PDB" id="1K8K">
    <property type="method" value="X-ray"/>
    <property type="resolution" value="2.00 A"/>
    <property type="chains" value="A=1-418"/>
</dbReference>
<dbReference type="PDB" id="1TYQ">
    <property type="method" value="X-ray"/>
    <property type="resolution" value="2.55 A"/>
    <property type="chains" value="A=1-418"/>
</dbReference>
<dbReference type="PDB" id="1U2V">
    <property type="method" value="X-ray"/>
    <property type="resolution" value="2.55 A"/>
    <property type="chains" value="A=1-418"/>
</dbReference>
<dbReference type="PDB" id="2P9I">
    <property type="method" value="X-ray"/>
    <property type="resolution" value="2.46 A"/>
    <property type="chains" value="A=1-418"/>
</dbReference>
<dbReference type="PDB" id="2P9K">
    <property type="method" value="X-ray"/>
    <property type="resolution" value="2.59 A"/>
    <property type="chains" value="A=1-418"/>
</dbReference>
<dbReference type="PDB" id="2P9L">
    <property type="method" value="X-ray"/>
    <property type="resolution" value="2.65 A"/>
    <property type="chains" value="A=1-418"/>
</dbReference>
<dbReference type="PDB" id="2P9N">
    <property type="method" value="X-ray"/>
    <property type="resolution" value="2.85 A"/>
    <property type="chains" value="A=1-418"/>
</dbReference>
<dbReference type="PDB" id="2P9P">
    <property type="method" value="X-ray"/>
    <property type="resolution" value="2.90 A"/>
    <property type="chains" value="A=1-418"/>
</dbReference>
<dbReference type="PDB" id="2P9S">
    <property type="method" value="X-ray"/>
    <property type="resolution" value="2.68 A"/>
    <property type="chains" value="A=1-418"/>
</dbReference>
<dbReference type="PDB" id="2P9U">
    <property type="method" value="X-ray"/>
    <property type="resolution" value="2.75 A"/>
    <property type="chains" value="A=1-418"/>
</dbReference>
<dbReference type="PDB" id="3DXK">
    <property type="method" value="X-ray"/>
    <property type="resolution" value="2.70 A"/>
    <property type="chains" value="A=1-418"/>
</dbReference>
<dbReference type="PDB" id="3DXM">
    <property type="method" value="X-ray"/>
    <property type="resolution" value="2.85 A"/>
    <property type="chains" value="A=1-418"/>
</dbReference>
<dbReference type="PDB" id="3RSE">
    <property type="method" value="X-ray"/>
    <property type="resolution" value="2.65 A"/>
    <property type="chains" value="A=1-418"/>
</dbReference>
<dbReference type="PDB" id="3UKR">
    <property type="method" value="X-ray"/>
    <property type="resolution" value="2.48 A"/>
    <property type="chains" value="A=1-418"/>
</dbReference>
<dbReference type="PDB" id="3UKU">
    <property type="method" value="X-ray"/>
    <property type="resolution" value="2.75 A"/>
    <property type="chains" value="A=1-418"/>
</dbReference>
<dbReference type="PDB" id="3ULE">
    <property type="method" value="X-ray"/>
    <property type="resolution" value="2.50 A"/>
    <property type="chains" value="A=1-418"/>
</dbReference>
<dbReference type="PDB" id="4JD2">
    <property type="method" value="X-ray"/>
    <property type="resolution" value="3.08 A"/>
    <property type="chains" value="A=1-418"/>
</dbReference>
<dbReference type="PDB" id="4XEI">
    <property type="method" value="X-ray"/>
    <property type="resolution" value="3.87 A"/>
    <property type="chains" value="A=1-418"/>
</dbReference>
<dbReference type="PDB" id="4XF2">
    <property type="method" value="X-ray"/>
    <property type="resolution" value="5.00 A"/>
    <property type="chains" value="A/T=1-418"/>
</dbReference>
<dbReference type="PDB" id="6DEC">
    <property type="method" value="X-ray"/>
    <property type="resolution" value="4.60 A"/>
    <property type="chains" value="A/H=1-418"/>
</dbReference>
<dbReference type="PDB" id="7JPN">
    <property type="method" value="EM"/>
    <property type="resolution" value="3.24 A"/>
    <property type="chains" value="A=3-415"/>
</dbReference>
<dbReference type="PDB" id="7T5Q">
    <property type="method" value="EM"/>
    <property type="resolution" value="3.40 A"/>
    <property type="chains" value="A=1-418"/>
</dbReference>
<dbReference type="PDB" id="7TPT">
    <property type="method" value="EM"/>
    <property type="resolution" value="3.90 A"/>
    <property type="chains" value="A=1-418"/>
</dbReference>
<dbReference type="PDB" id="8TAH">
    <property type="method" value="EM"/>
    <property type="resolution" value="2.89 A"/>
    <property type="chains" value="A=1-418"/>
</dbReference>
<dbReference type="PDB" id="9DLX">
    <property type="method" value="EM"/>
    <property type="resolution" value="2.91 A"/>
    <property type="chains" value="A=3-414"/>
</dbReference>
<dbReference type="PDB" id="9DLZ">
    <property type="method" value="EM"/>
    <property type="resolution" value="3.40 A"/>
    <property type="chains" value="A=3-413"/>
</dbReference>
<dbReference type="PDBsum" id="1K8K"/>
<dbReference type="PDBsum" id="1TYQ"/>
<dbReference type="PDBsum" id="1U2V"/>
<dbReference type="PDBsum" id="2P9I"/>
<dbReference type="PDBsum" id="2P9K"/>
<dbReference type="PDBsum" id="2P9L"/>
<dbReference type="PDBsum" id="2P9N"/>
<dbReference type="PDBsum" id="2P9P"/>
<dbReference type="PDBsum" id="2P9S"/>
<dbReference type="PDBsum" id="2P9U"/>
<dbReference type="PDBsum" id="3DXK"/>
<dbReference type="PDBsum" id="3DXM"/>
<dbReference type="PDBsum" id="3RSE"/>
<dbReference type="PDBsum" id="3UKR"/>
<dbReference type="PDBsum" id="3UKU"/>
<dbReference type="PDBsum" id="3ULE"/>
<dbReference type="PDBsum" id="4JD2"/>
<dbReference type="PDBsum" id="4XEI"/>
<dbReference type="PDBsum" id="4XF2"/>
<dbReference type="PDBsum" id="6DEC"/>
<dbReference type="PDBsum" id="7JPN"/>
<dbReference type="PDBsum" id="7T5Q"/>
<dbReference type="PDBsum" id="7TPT"/>
<dbReference type="PDBsum" id="8TAH"/>
<dbReference type="PDBsum" id="9DLX"/>
<dbReference type="PDBsum" id="9DLZ"/>
<dbReference type="EMDB" id="EMD-22416"/>
<dbReference type="EMDB" id="EMD-25707"/>
<dbReference type="EMDB" id="EMD-26063"/>
<dbReference type="EMDB" id="EMD-41135"/>
<dbReference type="EMDB" id="EMD-46992"/>
<dbReference type="EMDB" id="EMD-46993"/>
<dbReference type="SMR" id="P61157"/>
<dbReference type="BioGRID" id="158917">
    <property type="interactions" value="3"/>
</dbReference>
<dbReference type="DIP" id="DIP-29790N"/>
<dbReference type="FunCoup" id="P61157">
    <property type="interactions" value="4230"/>
</dbReference>
<dbReference type="IntAct" id="P61157">
    <property type="interactions" value="7"/>
</dbReference>
<dbReference type="STRING" id="9913.ENSBTAP00000060320"/>
<dbReference type="PaxDb" id="9913-ENSBTAP00000004410"/>
<dbReference type="PeptideAtlas" id="P61157"/>
<dbReference type="GeneID" id="281597"/>
<dbReference type="KEGG" id="bta:281597"/>
<dbReference type="CTD" id="10096"/>
<dbReference type="VEuPathDB" id="HostDB:ENSBTAG00000003401"/>
<dbReference type="eggNOG" id="KOG0678">
    <property type="taxonomic scope" value="Eukaryota"/>
</dbReference>
<dbReference type="HOGENOM" id="CLU_027965_3_0_1"/>
<dbReference type="InParanoid" id="P61157"/>
<dbReference type="OMA" id="GIHYPIR"/>
<dbReference type="OrthoDB" id="421448at2759"/>
<dbReference type="Reactome" id="R-BTA-2029482">
    <property type="pathway name" value="Regulation of actin dynamics for phagocytic cup formation"/>
</dbReference>
<dbReference type="Reactome" id="R-BTA-3928662">
    <property type="pathway name" value="EPHB-mediated forward signaling"/>
</dbReference>
<dbReference type="Reactome" id="R-BTA-5663213">
    <property type="pathway name" value="RHO GTPases Activate WASPs and WAVEs"/>
</dbReference>
<dbReference type="Reactome" id="R-BTA-8856828">
    <property type="pathway name" value="Clathrin-mediated endocytosis"/>
</dbReference>
<dbReference type="CD-CODE" id="D7FE2080">
    <property type="entry name" value="Nucleolus"/>
</dbReference>
<dbReference type="EvolutionaryTrace" id="P61157"/>
<dbReference type="PRO" id="PR:P61157"/>
<dbReference type="Proteomes" id="UP000009136">
    <property type="component" value="Chromosome 2"/>
</dbReference>
<dbReference type="Bgee" id="ENSBTAG00000003401">
    <property type="expression patterns" value="Expressed in diaphragm and 107 other cell types or tissues"/>
</dbReference>
<dbReference type="GO" id="GO:0005885">
    <property type="term" value="C:Arp2/3 protein complex"/>
    <property type="evidence" value="ECO:0000250"/>
    <property type="project" value="UniProtKB"/>
</dbReference>
<dbReference type="GO" id="GO:0042995">
    <property type="term" value="C:cell projection"/>
    <property type="evidence" value="ECO:0007669"/>
    <property type="project" value="UniProtKB-SubCell"/>
</dbReference>
<dbReference type="GO" id="GO:0005737">
    <property type="term" value="C:cytoplasm"/>
    <property type="evidence" value="ECO:0000250"/>
    <property type="project" value="UniProtKB"/>
</dbReference>
<dbReference type="GO" id="GO:0005829">
    <property type="term" value="C:cytosol"/>
    <property type="evidence" value="ECO:0000304"/>
    <property type="project" value="Reactome"/>
</dbReference>
<dbReference type="GO" id="GO:0005634">
    <property type="term" value="C:nucleus"/>
    <property type="evidence" value="ECO:0000250"/>
    <property type="project" value="UniProtKB"/>
</dbReference>
<dbReference type="GO" id="GO:0035861">
    <property type="term" value="C:site of double-strand break"/>
    <property type="evidence" value="ECO:0000250"/>
    <property type="project" value="UniProtKB"/>
</dbReference>
<dbReference type="GO" id="GO:0003779">
    <property type="term" value="F:actin binding"/>
    <property type="evidence" value="ECO:0007669"/>
    <property type="project" value="UniProtKB-KW"/>
</dbReference>
<dbReference type="GO" id="GO:0005524">
    <property type="term" value="F:ATP binding"/>
    <property type="evidence" value="ECO:0007669"/>
    <property type="project" value="UniProtKB-KW"/>
</dbReference>
<dbReference type="GO" id="GO:0034314">
    <property type="term" value="P:Arp2/3 complex-mediated actin nucleation"/>
    <property type="evidence" value="ECO:0000250"/>
    <property type="project" value="UniProtKB"/>
</dbReference>
<dbReference type="GO" id="GO:0060271">
    <property type="term" value="P:cilium assembly"/>
    <property type="evidence" value="ECO:0000250"/>
    <property type="project" value="UniProtKB"/>
</dbReference>
<dbReference type="GO" id="GO:0010592">
    <property type="term" value="P:positive regulation of lamellipodium assembly"/>
    <property type="evidence" value="ECO:0000250"/>
    <property type="project" value="UniProtKB"/>
</dbReference>
<dbReference type="GO" id="GO:0045944">
    <property type="term" value="P:positive regulation of transcription by RNA polymerase II"/>
    <property type="evidence" value="ECO:0000250"/>
    <property type="project" value="UniProtKB"/>
</dbReference>
<dbReference type="CDD" id="cd10221">
    <property type="entry name" value="ASKHA_NBD_Arp3-like"/>
    <property type="match status" value="1"/>
</dbReference>
<dbReference type="FunFam" id="3.30.420.40:FF:000029">
    <property type="entry name" value="Actin-related protein 3"/>
    <property type="match status" value="1"/>
</dbReference>
<dbReference type="FunFam" id="3.30.420.40:FF:000315">
    <property type="entry name" value="Actin-related protein 3"/>
    <property type="match status" value="1"/>
</dbReference>
<dbReference type="FunFam" id="3.30.420.40:FF:000803">
    <property type="entry name" value="Actin-related protein 3"/>
    <property type="match status" value="1"/>
</dbReference>
<dbReference type="FunFam" id="3.90.640.10:FF:000006">
    <property type="entry name" value="Actin-related protein 3 (ARP3)"/>
    <property type="match status" value="1"/>
</dbReference>
<dbReference type="FunFam" id="2.30.36.70:FF:000002">
    <property type="entry name" value="actin-related protein 3 isoform X1"/>
    <property type="match status" value="1"/>
</dbReference>
<dbReference type="Gene3D" id="3.30.420.40">
    <property type="match status" value="2"/>
</dbReference>
<dbReference type="Gene3D" id="2.30.36.70">
    <property type="entry name" value="Actin, Chain A, domain 2"/>
    <property type="match status" value="1"/>
</dbReference>
<dbReference type="Gene3D" id="3.90.640.10">
    <property type="entry name" value="Actin, Chain A, domain 4"/>
    <property type="match status" value="1"/>
</dbReference>
<dbReference type="InterPro" id="IPR004000">
    <property type="entry name" value="Actin"/>
</dbReference>
<dbReference type="InterPro" id="IPR020902">
    <property type="entry name" value="Actin/actin-like_CS"/>
</dbReference>
<dbReference type="InterPro" id="IPR043129">
    <property type="entry name" value="ATPase_NBD"/>
</dbReference>
<dbReference type="PANTHER" id="PTHR11937">
    <property type="entry name" value="ACTIN"/>
    <property type="match status" value="1"/>
</dbReference>
<dbReference type="Pfam" id="PF00022">
    <property type="entry name" value="Actin"/>
    <property type="match status" value="2"/>
</dbReference>
<dbReference type="SMART" id="SM00268">
    <property type="entry name" value="ACTIN"/>
    <property type="match status" value="1"/>
</dbReference>
<dbReference type="SUPFAM" id="SSF53067">
    <property type="entry name" value="Actin-like ATPase domain"/>
    <property type="match status" value="2"/>
</dbReference>
<dbReference type="PROSITE" id="PS01132">
    <property type="entry name" value="ACTINS_ACT_LIKE"/>
    <property type="match status" value="1"/>
</dbReference>